<gene>
    <name type="primary">EXLB1</name>
    <name type="synonym">EXPR1</name>
    <name type="ordered locus">At4g17030</name>
    <name type="ORF">dl4545c</name>
</gene>
<accession>O23547</accession>
<comment type="subcellular location">
    <subcellularLocation>
        <location evidence="4">Secreted</location>
    </subcellularLocation>
</comment>
<comment type="similarity">
    <text evidence="4">Belongs to the expansin family. Expansin-like B subfamily.</text>
</comment>
<comment type="sequence caution" evidence="4">
    <conflict type="erroneous gene model prediction">
        <sequence resource="EMBL-CDS" id="CAB10483"/>
    </conflict>
</comment>
<comment type="sequence caution" evidence="4">
    <conflict type="erroneous gene model prediction">
        <sequence resource="EMBL-CDS" id="CAB80974"/>
    </conflict>
</comment>
<comment type="online information" name="EXPANSIN homepage">
    <link uri="https://www.dept.psu.edu/biology/groups/expansins/index.htm"/>
</comment>
<dbReference type="EMBL" id="Z97342">
    <property type="protein sequence ID" value="CAB10483.1"/>
    <property type="status" value="ALT_SEQ"/>
    <property type="molecule type" value="Genomic_DNA"/>
</dbReference>
<dbReference type="EMBL" id="AL161545">
    <property type="protein sequence ID" value="CAB80974.1"/>
    <property type="status" value="ALT_SEQ"/>
    <property type="molecule type" value="Genomic_DNA"/>
</dbReference>
<dbReference type="EMBL" id="CP002687">
    <property type="protein sequence ID" value="AEE83841.1"/>
    <property type="molecule type" value="Genomic_DNA"/>
</dbReference>
<dbReference type="EMBL" id="BT005867">
    <property type="protein sequence ID" value="AAO64802.1"/>
    <property type="molecule type" value="mRNA"/>
</dbReference>
<dbReference type="RefSeq" id="NP_193436.2">
    <property type="nucleotide sequence ID" value="NM_117807.3"/>
</dbReference>
<dbReference type="SMR" id="O23547"/>
<dbReference type="BioGRID" id="12704">
    <property type="interactions" value="2"/>
</dbReference>
<dbReference type="FunCoup" id="O23547">
    <property type="interactions" value="1"/>
</dbReference>
<dbReference type="IntAct" id="O23547">
    <property type="interactions" value="2"/>
</dbReference>
<dbReference type="STRING" id="3702.O23547"/>
<dbReference type="GlyCosmos" id="O23547">
    <property type="glycosylation" value="1 site, No reported glycans"/>
</dbReference>
<dbReference type="GlyGen" id="O23547">
    <property type="glycosylation" value="1 site"/>
</dbReference>
<dbReference type="PaxDb" id="3702-AT4G17030.1"/>
<dbReference type="ProteomicsDB" id="222301"/>
<dbReference type="EnsemblPlants" id="AT4G17030.1">
    <property type="protein sequence ID" value="AT4G17030.1"/>
    <property type="gene ID" value="AT4G17030"/>
</dbReference>
<dbReference type="GeneID" id="827411"/>
<dbReference type="Gramene" id="AT4G17030.1">
    <property type="protein sequence ID" value="AT4G17030.1"/>
    <property type="gene ID" value="AT4G17030"/>
</dbReference>
<dbReference type="KEGG" id="ath:AT4G17030"/>
<dbReference type="Araport" id="AT4G17030"/>
<dbReference type="TAIR" id="AT4G17030">
    <property type="gene designation" value="EXLB1"/>
</dbReference>
<dbReference type="eggNOG" id="ENOG502QTU4">
    <property type="taxonomic scope" value="Eukaryota"/>
</dbReference>
<dbReference type="HOGENOM" id="CLU_027462_3_1_1"/>
<dbReference type="InParanoid" id="O23547"/>
<dbReference type="OMA" id="YGYNLMI"/>
<dbReference type="OrthoDB" id="5823761at2759"/>
<dbReference type="PhylomeDB" id="O23547"/>
<dbReference type="PRO" id="PR:O23547"/>
<dbReference type="Proteomes" id="UP000006548">
    <property type="component" value="Chromosome 4"/>
</dbReference>
<dbReference type="ExpressionAtlas" id="O23547">
    <property type="expression patterns" value="baseline and differential"/>
</dbReference>
<dbReference type="GO" id="GO:0005576">
    <property type="term" value="C:extracellular region"/>
    <property type="evidence" value="ECO:0007669"/>
    <property type="project" value="UniProtKB-SubCell"/>
</dbReference>
<dbReference type="GO" id="GO:0009653">
    <property type="term" value="P:anatomical structure morphogenesis"/>
    <property type="evidence" value="ECO:0007669"/>
    <property type="project" value="UniProtKB-ARBA"/>
</dbReference>
<dbReference type="GO" id="GO:0009828">
    <property type="term" value="P:plant-type cell wall loosening"/>
    <property type="evidence" value="ECO:0000250"/>
    <property type="project" value="UniProtKB"/>
</dbReference>
<dbReference type="GO" id="GO:0019953">
    <property type="term" value="P:sexual reproduction"/>
    <property type="evidence" value="ECO:0007669"/>
    <property type="project" value="InterPro"/>
</dbReference>
<dbReference type="CDD" id="cd22277">
    <property type="entry name" value="DPBB_EXLB_N"/>
    <property type="match status" value="1"/>
</dbReference>
<dbReference type="Gene3D" id="2.60.40.760">
    <property type="entry name" value="Expansin, cellulose-binding-like domain"/>
    <property type="match status" value="1"/>
</dbReference>
<dbReference type="Gene3D" id="2.40.40.10">
    <property type="entry name" value="RlpA-like domain"/>
    <property type="match status" value="1"/>
</dbReference>
<dbReference type="InterPro" id="IPR007118">
    <property type="entry name" value="Expan_Lol_pI"/>
</dbReference>
<dbReference type="InterPro" id="IPR007112">
    <property type="entry name" value="Expansin/allergen_DPBB_dom"/>
</dbReference>
<dbReference type="InterPro" id="IPR007117">
    <property type="entry name" value="Expansin_CBD"/>
</dbReference>
<dbReference type="InterPro" id="IPR036749">
    <property type="entry name" value="Expansin_CBD_sf"/>
</dbReference>
<dbReference type="InterPro" id="IPR005795">
    <property type="entry name" value="LolPI"/>
</dbReference>
<dbReference type="InterPro" id="IPR009009">
    <property type="entry name" value="RlpA-like_DPBB"/>
</dbReference>
<dbReference type="InterPro" id="IPR036908">
    <property type="entry name" value="RlpA-like_sf"/>
</dbReference>
<dbReference type="PANTHER" id="PTHR31692">
    <property type="entry name" value="EXPANSIN-B3"/>
    <property type="match status" value="1"/>
</dbReference>
<dbReference type="PANTHER" id="PTHR31692:SF2">
    <property type="entry name" value="EXPANSIN-LIKE B1"/>
    <property type="match status" value="1"/>
</dbReference>
<dbReference type="Pfam" id="PF03330">
    <property type="entry name" value="DPBB_1"/>
    <property type="match status" value="1"/>
</dbReference>
<dbReference type="Pfam" id="PF01357">
    <property type="entry name" value="Expansin_C"/>
    <property type="match status" value="1"/>
</dbReference>
<dbReference type="PRINTS" id="PR01225">
    <property type="entry name" value="EXPANSNFAMLY"/>
</dbReference>
<dbReference type="PRINTS" id="PR00829">
    <property type="entry name" value="LOLP1ALLERGN"/>
</dbReference>
<dbReference type="SUPFAM" id="SSF50685">
    <property type="entry name" value="Barwin-like endoglucanases"/>
    <property type="match status" value="1"/>
</dbReference>
<dbReference type="SUPFAM" id="SSF49590">
    <property type="entry name" value="PHL pollen allergen"/>
    <property type="match status" value="1"/>
</dbReference>
<dbReference type="PROSITE" id="PS50843">
    <property type="entry name" value="EXPANSIN_CBD"/>
    <property type="match status" value="1"/>
</dbReference>
<dbReference type="PROSITE" id="PS50842">
    <property type="entry name" value="EXPANSIN_EG45"/>
    <property type="match status" value="1"/>
</dbReference>
<sequence>MKHSHVLLLLFVQVIVLLPLLCLSDDFVNSRATYYGSPDCKANPRGHCGYGEFGRDINNGEVSGVSWRLWNNGTGCGACYQVRCKIPPHCSEEGVYVVATDSGEGDGTDFILSPKAYGRMARPGTENQLYSFGVVNVEYQRIPCRYAGYNLVYKIHEKSYNPHYLAILVLYVGGVNDILAVEVWQEDCKEWRRMRRVFGAVHDLQNPPRGTLTLRFLVYGSAGINWIQSPNAIPADWTAGATYDSNILLT</sequence>
<proteinExistence type="evidence at transcript level"/>
<name>EXLB1_ARATH</name>
<feature type="signal peptide" evidence="1">
    <location>
        <begin position="1"/>
        <end position="24"/>
    </location>
</feature>
<feature type="chain" id="PRO_0000008715" description="Expansin-like B1">
    <location>
        <begin position="25"/>
        <end position="250"/>
    </location>
</feature>
<feature type="domain" description="Expansin-like EG45" evidence="3">
    <location>
        <begin position="45"/>
        <end position="149"/>
    </location>
</feature>
<feature type="domain" description="Expansin-like CBD" evidence="2">
    <location>
        <begin position="163"/>
        <end position="245"/>
    </location>
</feature>
<feature type="glycosylation site" description="N-linked (GlcNAc...) asparagine" evidence="1">
    <location>
        <position position="72"/>
    </location>
</feature>
<reference key="1">
    <citation type="journal article" date="1998" name="Nature">
        <title>Analysis of 1.9 Mb of contiguous sequence from chromosome 4 of Arabidopsis thaliana.</title>
        <authorList>
            <person name="Bevan M."/>
            <person name="Bancroft I."/>
            <person name="Bent E."/>
            <person name="Love K."/>
            <person name="Goodman H.M."/>
            <person name="Dean C."/>
            <person name="Bergkamp R."/>
            <person name="Dirkse W."/>
            <person name="van Staveren M."/>
            <person name="Stiekema W."/>
            <person name="Drost L."/>
            <person name="Ridley P."/>
            <person name="Hudson S.-A."/>
            <person name="Patel K."/>
            <person name="Murphy G."/>
            <person name="Piffanelli P."/>
            <person name="Wedler H."/>
            <person name="Wedler E."/>
            <person name="Wambutt R."/>
            <person name="Weitzenegger T."/>
            <person name="Pohl T."/>
            <person name="Terryn N."/>
            <person name="Gielen J."/>
            <person name="Villarroel R."/>
            <person name="De Clercq R."/>
            <person name="van Montagu M."/>
            <person name="Lecharny A."/>
            <person name="Aubourg S."/>
            <person name="Gy I."/>
            <person name="Kreis M."/>
            <person name="Lao N."/>
            <person name="Kavanagh T."/>
            <person name="Hempel S."/>
            <person name="Kotter P."/>
            <person name="Entian K.-D."/>
            <person name="Rieger M."/>
            <person name="Schaefer M."/>
            <person name="Funk B."/>
            <person name="Mueller-Auer S."/>
            <person name="Silvey M."/>
            <person name="James R."/>
            <person name="Monfort A."/>
            <person name="Pons A."/>
            <person name="Puigdomenech P."/>
            <person name="Douka A."/>
            <person name="Voukelatou E."/>
            <person name="Milioni D."/>
            <person name="Hatzopoulos P."/>
            <person name="Piravandi E."/>
            <person name="Obermaier B."/>
            <person name="Hilbert H."/>
            <person name="Duesterhoeft A."/>
            <person name="Moores T."/>
            <person name="Jones J.D.G."/>
            <person name="Eneva T."/>
            <person name="Palme K."/>
            <person name="Benes V."/>
            <person name="Rechmann S."/>
            <person name="Ansorge W."/>
            <person name="Cooke R."/>
            <person name="Berger C."/>
            <person name="Delseny M."/>
            <person name="Voet M."/>
            <person name="Volckaert G."/>
            <person name="Mewes H.-W."/>
            <person name="Klosterman S."/>
            <person name="Schueller C."/>
            <person name="Chalwatzis N."/>
        </authorList>
    </citation>
    <scope>NUCLEOTIDE SEQUENCE [LARGE SCALE GENOMIC DNA]</scope>
    <source>
        <strain>cv. Columbia</strain>
    </source>
</reference>
<reference key="2">
    <citation type="journal article" date="1999" name="Nature">
        <title>Sequence and analysis of chromosome 4 of the plant Arabidopsis thaliana.</title>
        <authorList>
            <person name="Mayer K.F.X."/>
            <person name="Schueller C."/>
            <person name="Wambutt R."/>
            <person name="Murphy G."/>
            <person name="Volckaert G."/>
            <person name="Pohl T."/>
            <person name="Duesterhoeft A."/>
            <person name="Stiekema W."/>
            <person name="Entian K.-D."/>
            <person name="Terryn N."/>
            <person name="Harris B."/>
            <person name="Ansorge W."/>
            <person name="Brandt P."/>
            <person name="Grivell L.A."/>
            <person name="Rieger M."/>
            <person name="Weichselgartner M."/>
            <person name="de Simone V."/>
            <person name="Obermaier B."/>
            <person name="Mache R."/>
            <person name="Mueller M."/>
            <person name="Kreis M."/>
            <person name="Delseny M."/>
            <person name="Puigdomenech P."/>
            <person name="Watson M."/>
            <person name="Schmidtheini T."/>
            <person name="Reichert B."/>
            <person name="Portetelle D."/>
            <person name="Perez-Alonso M."/>
            <person name="Boutry M."/>
            <person name="Bancroft I."/>
            <person name="Vos P."/>
            <person name="Hoheisel J."/>
            <person name="Zimmermann W."/>
            <person name="Wedler H."/>
            <person name="Ridley P."/>
            <person name="Langham S.-A."/>
            <person name="McCullagh B."/>
            <person name="Bilham L."/>
            <person name="Robben J."/>
            <person name="van der Schueren J."/>
            <person name="Grymonprez B."/>
            <person name="Chuang Y.-J."/>
            <person name="Vandenbussche F."/>
            <person name="Braeken M."/>
            <person name="Weltjens I."/>
            <person name="Voet M."/>
            <person name="Bastiaens I."/>
            <person name="Aert R."/>
            <person name="Defoor E."/>
            <person name="Weitzenegger T."/>
            <person name="Bothe G."/>
            <person name="Ramsperger U."/>
            <person name="Hilbert H."/>
            <person name="Braun M."/>
            <person name="Holzer E."/>
            <person name="Brandt A."/>
            <person name="Peters S."/>
            <person name="van Staveren M."/>
            <person name="Dirkse W."/>
            <person name="Mooijman P."/>
            <person name="Klein Lankhorst R."/>
            <person name="Rose M."/>
            <person name="Hauf J."/>
            <person name="Koetter P."/>
            <person name="Berneiser S."/>
            <person name="Hempel S."/>
            <person name="Feldpausch M."/>
            <person name="Lamberth S."/>
            <person name="Van den Daele H."/>
            <person name="De Keyser A."/>
            <person name="Buysshaert C."/>
            <person name="Gielen J."/>
            <person name="Villarroel R."/>
            <person name="De Clercq R."/>
            <person name="van Montagu M."/>
            <person name="Rogers J."/>
            <person name="Cronin A."/>
            <person name="Quail M.A."/>
            <person name="Bray-Allen S."/>
            <person name="Clark L."/>
            <person name="Doggett J."/>
            <person name="Hall S."/>
            <person name="Kay M."/>
            <person name="Lennard N."/>
            <person name="McLay K."/>
            <person name="Mayes R."/>
            <person name="Pettett A."/>
            <person name="Rajandream M.A."/>
            <person name="Lyne M."/>
            <person name="Benes V."/>
            <person name="Rechmann S."/>
            <person name="Borkova D."/>
            <person name="Bloecker H."/>
            <person name="Scharfe M."/>
            <person name="Grimm M."/>
            <person name="Loehnert T.-H."/>
            <person name="Dose S."/>
            <person name="de Haan M."/>
            <person name="Maarse A.C."/>
            <person name="Schaefer M."/>
            <person name="Mueller-Auer S."/>
            <person name="Gabel C."/>
            <person name="Fuchs M."/>
            <person name="Fartmann B."/>
            <person name="Granderath K."/>
            <person name="Dauner D."/>
            <person name="Herzl A."/>
            <person name="Neumann S."/>
            <person name="Argiriou A."/>
            <person name="Vitale D."/>
            <person name="Liguori R."/>
            <person name="Piravandi E."/>
            <person name="Massenet O."/>
            <person name="Quigley F."/>
            <person name="Clabauld G."/>
            <person name="Muendlein A."/>
            <person name="Felber R."/>
            <person name="Schnabl S."/>
            <person name="Hiller R."/>
            <person name="Schmidt W."/>
            <person name="Lecharny A."/>
            <person name="Aubourg S."/>
            <person name="Chefdor F."/>
            <person name="Cooke R."/>
            <person name="Berger C."/>
            <person name="Monfort A."/>
            <person name="Casacuberta E."/>
            <person name="Gibbons T."/>
            <person name="Weber N."/>
            <person name="Vandenbol M."/>
            <person name="Bargues M."/>
            <person name="Terol J."/>
            <person name="Torres A."/>
            <person name="Perez-Perez A."/>
            <person name="Purnelle B."/>
            <person name="Bent E."/>
            <person name="Johnson S."/>
            <person name="Tacon D."/>
            <person name="Jesse T."/>
            <person name="Heijnen L."/>
            <person name="Schwarz S."/>
            <person name="Scholler P."/>
            <person name="Heber S."/>
            <person name="Francs P."/>
            <person name="Bielke C."/>
            <person name="Frishman D."/>
            <person name="Haase D."/>
            <person name="Lemcke K."/>
            <person name="Mewes H.-W."/>
            <person name="Stocker S."/>
            <person name="Zaccaria P."/>
            <person name="Bevan M."/>
            <person name="Wilson R.K."/>
            <person name="de la Bastide M."/>
            <person name="Habermann K."/>
            <person name="Parnell L."/>
            <person name="Dedhia N."/>
            <person name="Gnoj L."/>
            <person name="Schutz K."/>
            <person name="Huang E."/>
            <person name="Spiegel L."/>
            <person name="Sekhon M."/>
            <person name="Murray J."/>
            <person name="Sheet P."/>
            <person name="Cordes M."/>
            <person name="Abu-Threideh J."/>
            <person name="Stoneking T."/>
            <person name="Kalicki J."/>
            <person name="Graves T."/>
            <person name="Harmon G."/>
            <person name="Edwards J."/>
            <person name="Latreille P."/>
            <person name="Courtney L."/>
            <person name="Cloud J."/>
            <person name="Abbott A."/>
            <person name="Scott K."/>
            <person name="Johnson D."/>
            <person name="Minx P."/>
            <person name="Bentley D."/>
            <person name="Fulton B."/>
            <person name="Miller N."/>
            <person name="Greco T."/>
            <person name="Kemp K."/>
            <person name="Kramer J."/>
            <person name="Fulton L."/>
            <person name="Mardis E."/>
            <person name="Dante M."/>
            <person name="Pepin K."/>
            <person name="Hillier L.W."/>
            <person name="Nelson J."/>
            <person name="Spieth J."/>
            <person name="Ryan E."/>
            <person name="Andrews S."/>
            <person name="Geisel C."/>
            <person name="Layman D."/>
            <person name="Du H."/>
            <person name="Ali J."/>
            <person name="Berghoff A."/>
            <person name="Jones K."/>
            <person name="Drone K."/>
            <person name="Cotton M."/>
            <person name="Joshu C."/>
            <person name="Antonoiu B."/>
            <person name="Zidanic M."/>
            <person name="Strong C."/>
            <person name="Sun H."/>
            <person name="Lamar B."/>
            <person name="Yordan C."/>
            <person name="Ma P."/>
            <person name="Zhong J."/>
            <person name="Preston R."/>
            <person name="Vil D."/>
            <person name="Shekher M."/>
            <person name="Matero A."/>
            <person name="Shah R."/>
            <person name="Swaby I.K."/>
            <person name="O'Shaughnessy A."/>
            <person name="Rodriguez M."/>
            <person name="Hoffman J."/>
            <person name="Till S."/>
            <person name="Granat S."/>
            <person name="Shohdy N."/>
            <person name="Hasegawa A."/>
            <person name="Hameed A."/>
            <person name="Lodhi M."/>
            <person name="Johnson A."/>
            <person name="Chen E."/>
            <person name="Marra M.A."/>
            <person name="Martienssen R."/>
            <person name="McCombie W.R."/>
        </authorList>
    </citation>
    <scope>NUCLEOTIDE SEQUENCE [LARGE SCALE GENOMIC DNA]</scope>
    <source>
        <strain>cv. Columbia</strain>
    </source>
</reference>
<reference key="3">
    <citation type="journal article" date="2017" name="Plant J.">
        <title>Araport11: a complete reannotation of the Arabidopsis thaliana reference genome.</title>
        <authorList>
            <person name="Cheng C.Y."/>
            <person name="Krishnakumar V."/>
            <person name="Chan A.P."/>
            <person name="Thibaud-Nissen F."/>
            <person name="Schobel S."/>
            <person name="Town C.D."/>
        </authorList>
    </citation>
    <scope>GENOME REANNOTATION</scope>
    <source>
        <strain>cv. Columbia</strain>
    </source>
</reference>
<reference key="4">
    <citation type="journal article" date="2003" name="Science">
        <title>Empirical analysis of transcriptional activity in the Arabidopsis genome.</title>
        <authorList>
            <person name="Yamada K."/>
            <person name="Lim J."/>
            <person name="Dale J.M."/>
            <person name="Chen H."/>
            <person name="Shinn P."/>
            <person name="Palm C.J."/>
            <person name="Southwick A.M."/>
            <person name="Wu H.C."/>
            <person name="Kim C.J."/>
            <person name="Nguyen M."/>
            <person name="Pham P.K."/>
            <person name="Cheuk R.F."/>
            <person name="Karlin-Newmann G."/>
            <person name="Liu S.X."/>
            <person name="Lam B."/>
            <person name="Sakano H."/>
            <person name="Wu T."/>
            <person name="Yu G."/>
            <person name="Miranda M."/>
            <person name="Quach H.L."/>
            <person name="Tripp M."/>
            <person name="Chang C.H."/>
            <person name="Lee J.M."/>
            <person name="Toriumi M.J."/>
            <person name="Chan M.M."/>
            <person name="Tang C.C."/>
            <person name="Onodera C.S."/>
            <person name="Deng J.M."/>
            <person name="Akiyama K."/>
            <person name="Ansari Y."/>
            <person name="Arakawa T."/>
            <person name="Banh J."/>
            <person name="Banno F."/>
            <person name="Bowser L."/>
            <person name="Brooks S.Y."/>
            <person name="Carninci P."/>
            <person name="Chao Q."/>
            <person name="Choy N."/>
            <person name="Enju A."/>
            <person name="Goldsmith A.D."/>
            <person name="Gurjal M."/>
            <person name="Hansen N.F."/>
            <person name="Hayashizaki Y."/>
            <person name="Johnson-Hopson C."/>
            <person name="Hsuan V.W."/>
            <person name="Iida K."/>
            <person name="Karnes M."/>
            <person name="Khan S."/>
            <person name="Koesema E."/>
            <person name="Ishida J."/>
            <person name="Jiang P.X."/>
            <person name="Jones T."/>
            <person name="Kawai J."/>
            <person name="Kamiya A."/>
            <person name="Meyers C."/>
            <person name="Nakajima M."/>
            <person name="Narusaka M."/>
            <person name="Seki M."/>
            <person name="Sakurai T."/>
            <person name="Satou M."/>
            <person name="Tamse R."/>
            <person name="Vaysberg M."/>
            <person name="Wallender E.K."/>
            <person name="Wong C."/>
            <person name="Yamamura Y."/>
            <person name="Yuan S."/>
            <person name="Shinozaki K."/>
            <person name="Davis R.W."/>
            <person name="Theologis A."/>
            <person name="Ecker J.R."/>
        </authorList>
    </citation>
    <scope>NUCLEOTIDE SEQUENCE [LARGE SCALE MRNA]</scope>
    <source>
        <strain>cv. Columbia</strain>
    </source>
</reference>
<reference key="5">
    <citation type="journal article" date="2004" name="Plant Mol. Biol.">
        <title>Nomenclature for members of the expansin superfamily of genes and proteins.</title>
        <authorList>
            <person name="Kende H."/>
            <person name="Bradford K.J."/>
            <person name="Brummell D.A."/>
            <person name="Cho H.-T."/>
            <person name="Cosgrove D.J."/>
            <person name="Fleming A.J."/>
            <person name="Gehring C."/>
            <person name="Lee Y."/>
            <person name="McQueen-Mason S.J."/>
            <person name="Rose J.K.C."/>
            <person name="Voesenek L.A.C."/>
        </authorList>
    </citation>
    <scope>NOMENCLATURE</scope>
</reference>
<organism>
    <name type="scientific">Arabidopsis thaliana</name>
    <name type="common">Mouse-ear cress</name>
    <dbReference type="NCBI Taxonomy" id="3702"/>
    <lineage>
        <taxon>Eukaryota</taxon>
        <taxon>Viridiplantae</taxon>
        <taxon>Streptophyta</taxon>
        <taxon>Embryophyta</taxon>
        <taxon>Tracheophyta</taxon>
        <taxon>Spermatophyta</taxon>
        <taxon>Magnoliopsida</taxon>
        <taxon>eudicotyledons</taxon>
        <taxon>Gunneridae</taxon>
        <taxon>Pentapetalae</taxon>
        <taxon>rosids</taxon>
        <taxon>malvids</taxon>
        <taxon>Brassicales</taxon>
        <taxon>Brassicaceae</taxon>
        <taxon>Camelineae</taxon>
        <taxon>Arabidopsis</taxon>
    </lineage>
</organism>
<protein>
    <recommendedName>
        <fullName>Expansin-like B1</fullName>
        <shortName>At-EXPR1</shortName>
        <shortName>AtEXLB1</shortName>
        <shortName>AtEXPR1</shortName>
    </recommendedName>
    <alternativeName>
        <fullName>Ath-ExpBeta-3.1</fullName>
    </alternativeName>
</protein>
<evidence type="ECO:0000255" key="1"/>
<evidence type="ECO:0000255" key="2">
    <source>
        <dbReference type="PROSITE-ProRule" id="PRU00078"/>
    </source>
</evidence>
<evidence type="ECO:0000255" key="3">
    <source>
        <dbReference type="PROSITE-ProRule" id="PRU00079"/>
    </source>
</evidence>
<evidence type="ECO:0000305" key="4"/>
<keyword id="KW-0325">Glycoprotein</keyword>
<keyword id="KW-1185">Reference proteome</keyword>
<keyword id="KW-0964">Secreted</keyword>
<keyword id="KW-0732">Signal</keyword>